<evidence type="ECO:0000255" key="1">
    <source>
        <dbReference type="HAMAP-Rule" id="MF_00252"/>
    </source>
</evidence>
<comment type="catalytic activity">
    <reaction evidence="1">
        <text>tRNA(Lys) + L-lysine + ATP = L-lysyl-tRNA(Lys) + AMP + diphosphate</text>
        <dbReference type="Rhea" id="RHEA:20792"/>
        <dbReference type="Rhea" id="RHEA-COMP:9696"/>
        <dbReference type="Rhea" id="RHEA-COMP:9697"/>
        <dbReference type="ChEBI" id="CHEBI:30616"/>
        <dbReference type="ChEBI" id="CHEBI:32551"/>
        <dbReference type="ChEBI" id="CHEBI:33019"/>
        <dbReference type="ChEBI" id="CHEBI:78442"/>
        <dbReference type="ChEBI" id="CHEBI:78529"/>
        <dbReference type="ChEBI" id="CHEBI:456215"/>
        <dbReference type="EC" id="6.1.1.6"/>
    </reaction>
</comment>
<comment type="cofactor">
    <cofactor evidence="1">
        <name>Mg(2+)</name>
        <dbReference type="ChEBI" id="CHEBI:18420"/>
    </cofactor>
    <text evidence="1">Binds 3 Mg(2+) ions per subunit.</text>
</comment>
<comment type="subunit">
    <text evidence="1">Homodimer.</text>
</comment>
<comment type="subcellular location">
    <subcellularLocation>
        <location evidence="1">Cytoplasm</location>
    </subcellularLocation>
</comment>
<comment type="similarity">
    <text evidence="1">Belongs to the class-II aminoacyl-tRNA synthetase family.</text>
</comment>
<gene>
    <name evidence="1" type="primary">lysS</name>
    <name type="ordered locus">CLD_0972</name>
</gene>
<protein>
    <recommendedName>
        <fullName evidence="1">Lysine--tRNA ligase</fullName>
        <ecNumber evidence="1">6.1.1.6</ecNumber>
    </recommendedName>
    <alternativeName>
        <fullName evidence="1">Lysyl-tRNA synthetase</fullName>
        <shortName evidence="1">LysRS</shortName>
    </alternativeName>
</protein>
<sequence>MSKEDNVINSFEEQANELMKERFQKLKELQSNGKDPFDVYKVERTHTSKEVKDNYEDLEGKTVTVAGRLMSKRVHGKAGFSDIHDRYGKIQLYIKINDVGEEKLKEYKTFDIGDIISVTGTVFKTKTGETSIHITDFQLVCKSLRPLPEKWHGLKDPDLRYRQRYVDLIINQDVRDTFIKRTAIIKSMREFLDNRGFLEVETPILSPIAGGAAAKPFITHHNALDIDMYLRIATELYLKRLIVGGFEKVYEIGKNFRNEGIDIRHNPEFTAIELYEAYADYNDMMEITENMIAYICEKVLGTTKVEYEGAEIDFTPPWRRLTMVDAVKEYAGVDFNIIKNDIEARTIAKEKHIEFKKELKDCTKGDVLIGLFEEFCEDKLMQPTFICDYPVENSPLTKKKRGNEAFTERFEGFVFGREVCNAYSELNDSIVQKERFMQQLKERELGDDEAYMMDDDFITSLEVGMPPTGGLGIGIDRLIMFLTDTHSIRDVILFPTMKPQPNNQ</sequence>
<proteinExistence type="inferred from homology"/>
<reference key="1">
    <citation type="journal article" date="2007" name="PLoS ONE">
        <title>Analysis of the neurotoxin complex genes in Clostridium botulinum A1-A4 and B1 strains: BoNT/A3, /Ba4 and /B1 clusters are located within plasmids.</title>
        <authorList>
            <person name="Smith T.J."/>
            <person name="Hill K.K."/>
            <person name="Foley B.T."/>
            <person name="Detter J.C."/>
            <person name="Munk A.C."/>
            <person name="Bruce D.C."/>
            <person name="Doggett N.A."/>
            <person name="Smith L.A."/>
            <person name="Marks J.D."/>
            <person name="Xie G."/>
            <person name="Brettin T.S."/>
        </authorList>
    </citation>
    <scope>NUCLEOTIDE SEQUENCE [LARGE SCALE GENOMIC DNA]</scope>
    <source>
        <strain>Okra / Type B1</strain>
    </source>
</reference>
<organism>
    <name type="scientific">Clostridium botulinum (strain Okra / Type B1)</name>
    <dbReference type="NCBI Taxonomy" id="498213"/>
    <lineage>
        <taxon>Bacteria</taxon>
        <taxon>Bacillati</taxon>
        <taxon>Bacillota</taxon>
        <taxon>Clostridia</taxon>
        <taxon>Eubacteriales</taxon>
        <taxon>Clostridiaceae</taxon>
        <taxon>Clostridium</taxon>
    </lineage>
</organism>
<feature type="chain" id="PRO_1000101111" description="Lysine--tRNA ligase">
    <location>
        <begin position="1"/>
        <end position="504"/>
    </location>
</feature>
<feature type="binding site" evidence="1">
    <location>
        <position position="411"/>
    </location>
    <ligand>
        <name>Mg(2+)</name>
        <dbReference type="ChEBI" id="CHEBI:18420"/>
        <label>1</label>
    </ligand>
</feature>
<feature type="binding site" evidence="1">
    <location>
        <position position="418"/>
    </location>
    <ligand>
        <name>Mg(2+)</name>
        <dbReference type="ChEBI" id="CHEBI:18420"/>
        <label>1</label>
    </ligand>
</feature>
<feature type="binding site" evidence="1">
    <location>
        <position position="418"/>
    </location>
    <ligand>
        <name>Mg(2+)</name>
        <dbReference type="ChEBI" id="CHEBI:18420"/>
        <label>2</label>
    </ligand>
</feature>
<accession>B1IGJ2</accession>
<name>SYK_CLOBK</name>
<dbReference type="EC" id="6.1.1.6" evidence="1"/>
<dbReference type="EMBL" id="CP000939">
    <property type="protein sequence ID" value="ACA46580.1"/>
    <property type="molecule type" value="Genomic_DNA"/>
</dbReference>
<dbReference type="RefSeq" id="WP_003359337.1">
    <property type="nucleotide sequence ID" value="NC_010516.1"/>
</dbReference>
<dbReference type="SMR" id="B1IGJ2"/>
<dbReference type="KEGG" id="cbb:CLD_0972"/>
<dbReference type="HOGENOM" id="CLU_008255_6_0_9"/>
<dbReference type="Proteomes" id="UP000008541">
    <property type="component" value="Chromosome"/>
</dbReference>
<dbReference type="GO" id="GO:0005829">
    <property type="term" value="C:cytosol"/>
    <property type="evidence" value="ECO:0007669"/>
    <property type="project" value="TreeGrafter"/>
</dbReference>
<dbReference type="GO" id="GO:0005524">
    <property type="term" value="F:ATP binding"/>
    <property type="evidence" value="ECO:0007669"/>
    <property type="project" value="UniProtKB-UniRule"/>
</dbReference>
<dbReference type="GO" id="GO:0140096">
    <property type="term" value="F:catalytic activity, acting on a protein"/>
    <property type="evidence" value="ECO:0007669"/>
    <property type="project" value="UniProtKB-ARBA"/>
</dbReference>
<dbReference type="GO" id="GO:0004824">
    <property type="term" value="F:lysine-tRNA ligase activity"/>
    <property type="evidence" value="ECO:0007669"/>
    <property type="project" value="UniProtKB-UniRule"/>
</dbReference>
<dbReference type="GO" id="GO:0000287">
    <property type="term" value="F:magnesium ion binding"/>
    <property type="evidence" value="ECO:0007669"/>
    <property type="project" value="UniProtKB-UniRule"/>
</dbReference>
<dbReference type="GO" id="GO:0016740">
    <property type="term" value="F:transferase activity"/>
    <property type="evidence" value="ECO:0007669"/>
    <property type="project" value="UniProtKB-ARBA"/>
</dbReference>
<dbReference type="GO" id="GO:0000049">
    <property type="term" value="F:tRNA binding"/>
    <property type="evidence" value="ECO:0007669"/>
    <property type="project" value="TreeGrafter"/>
</dbReference>
<dbReference type="GO" id="GO:0006430">
    <property type="term" value="P:lysyl-tRNA aminoacylation"/>
    <property type="evidence" value="ECO:0007669"/>
    <property type="project" value="UniProtKB-UniRule"/>
</dbReference>
<dbReference type="CDD" id="cd00775">
    <property type="entry name" value="LysRS_core"/>
    <property type="match status" value="1"/>
</dbReference>
<dbReference type="CDD" id="cd04322">
    <property type="entry name" value="LysRS_N"/>
    <property type="match status" value="1"/>
</dbReference>
<dbReference type="FunFam" id="2.40.50.140:FF:000024">
    <property type="entry name" value="Lysine--tRNA ligase"/>
    <property type="match status" value="1"/>
</dbReference>
<dbReference type="FunFam" id="3.30.930.10:FF:000001">
    <property type="entry name" value="Lysine--tRNA ligase"/>
    <property type="match status" value="1"/>
</dbReference>
<dbReference type="Gene3D" id="3.30.930.10">
    <property type="entry name" value="Bira Bifunctional Protein, Domain 2"/>
    <property type="match status" value="1"/>
</dbReference>
<dbReference type="Gene3D" id="2.40.50.140">
    <property type="entry name" value="Nucleic acid-binding proteins"/>
    <property type="match status" value="1"/>
</dbReference>
<dbReference type="HAMAP" id="MF_00252">
    <property type="entry name" value="Lys_tRNA_synth_class2"/>
    <property type="match status" value="1"/>
</dbReference>
<dbReference type="InterPro" id="IPR004364">
    <property type="entry name" value="Aa-tRNA-synt_II"/>
</dbReference>
<dbReference type="InterPro" id="IPR006195">
    <property type="entry name" value="aa-tRNA-synth_II"/>
</dbReference>
<dbReference type="InterPro" id="IPR045864">
    <property type="entry name" value="aa-tRNA-synth_II/BPL/LPL"/>
</dbReference>
<dbReference type="InterPro" id="IPR002313">
    <property type="entry name" value="Lys-tRNA-ligase_II"/>
</dbReference>
<dbReference type="InterPro" id="IPR034762">
    <property type="entry name" value="Lys-tRNA-ligase_II_bac/euk"/>
</dbReference>
<dbReference type="InterPro" id="IPR044136">
    <property type="entry name" value="Lys-tRNA-ligase_II_N"/>
</dbReference>
<dbReference type="InterPro" id="IPR018149">
    <property type="entry name" value="Lys-tRNA-synth_II_C"/>
</dbReference>
<dbReference type="InterPro" id="IPR012340">
    <property type="entry name" value="NA-bd_OB-fold"/>
</dbReference>
<dbReference type="InterPro" id="IPR004365">
    <property type="entry name" value="NA-bd_OB_tRNA"/>
</dbReference>
<dbReference type="NCBIfam" id="TIGR00499">
    <property type="entry name" value="lysS_bact"/>
    <property type="match status" value="1"/>
</dbReference>
<dbReference type="NCBIfam" id="NF001756">
    <property type="entry name" value="PRK00484.1"/>
    <property type="match status" value="1"/>
</dbReference>
<dbReference type="PANTHER" id="PTHR42918:SF15">
    <property type="entry name" value="LYSINE--TRNA LIGASE, CHLOROPLASTIC_MITOCHONDRIAL"/>
    <property type="match status" value="1"/>
</dbReference>
<dbReference type="PANTHER" id="PTHR42918">
    <property type="entry name" value="LYSYL-TRNA SYNTHETASE"/>
    <property type="match status" value="1"/>
</dbReference>
<dbReference type="Pfam" id="PF00152">
    <property type="entry name" value="tRNA-synt_2"/>
    <property type="match status" value="1"/>
</dbReference>
<dbReference type="Pfam" id="PF01336">
    <property type="entry name" value="tRNA_anti-codon"/>
    <property type="match status" value="1"/>
</dbReference>
<dbReference type="PIRSF" id="PIRSF039101">
    <property type="entry name" value="LysRS2"/>
    <property type="match status" value="1"/>
</dbReference>
<dbReference type="PRINTS" id="PR00982">
    <property type="entry name" value="TRNASYNTHLYS"/>
</dbReference>
<dbReference type="SUPFAM" id="SSF55681">
    <property type="entry name" value="Class II aaRS and biotin synthetases"/>
    <property type="match status" value="1"/>
</dbReference>
<dbReference type="SUPFAM" id="SSF50249">
    <property type="entry name" value="Nucleic acid-binding proteins"/>
    <property type="match status" value="1"/>
</dbReference>
<dbReference type="PROSITE" id="PS50862">
    <property type="entry name" value="AA_TRNA_LIGASE_II"/>
    <property type="match status" value="1"/>
</dbReference>
<keyword id="KW-0030">Aminoacyl-tRNA synthetase</keyword>
<keyword id="KW-0067">ATP-binding</keyword>
<keyword id="KW-0963">Cytoplasm</keyword>
<keyword id="KW-0436">Ligase</keyword>
<keyword id="KW-0460">Magnesium</keyword>
<keyword id="KW-0479">Metal-binding</keyword>
<keyword id="KW-0547">Nucleotide-binding</keyword>
<keyword id="KW-0648">Protein biosynthesis</keyword>